<gene>
    <name evidence="1" type="primary">rplU</name>
    <name type="ordered locus">PG_0314</name>
</gene>
<feature type="chain" id="PRO_0000270705" description="Large ribosomal subunit protein bL21">
    <location>
        <begin position="1"/>
        <end position="105"/>
    </location>
</feature>
<reference key="1">
    <citation type="journal article" date="2003" name="J. Bacteriol.">
        <title>Complete genome sequence of the oral pathogenic bacterium Porphyromonas gingivalis strain W83.</title>
        <authorList>
            <person name="Nelson K.E."/>
            <person name="Fleischmann R.D."/>
            <person name="DeBoy R.T."/>
            <person name="Paulsen I.T."/>
            <person name="Fouts D.E."/>
            <person name="Eisen J.A."/>
            <person name="Daugherty S.C."/>
            <person name="Dodson R.J."/>
            <person name="Durkin A.S."/>
            <person name="Gwinn M.L."/>
            <person name="Haft D.H."/>
            <person name="Kolonay J.F."/>
            <person name="Nelson W.C."/>
            <person name="Mason T.M."/>
            <person name="Tallon L."/>
            <person name="Gray J."/>
            <person name="Granger D."/>
            <person name="Tettelin H."/>
            <person name="Dong H."/>
            <person name="Galvin J.L."/>
            <person name="Duncan M.J."/>
            <person name="Dewhirst F.E."/>
            <person name="Fraser C.M."/>
        </authorList>
    </citation>
    <scope>NUCLEOTIDE SEQUENCE [LARGE SCALE GENOMIC DNA]</scope>
    <source>
        <strain>ATCC BAA-308 / W83</strain>
    </source>
</reference>
<evidence type="ECO:0000255" key="1">
    <source>
        <dbReference type="HAMAP-Rule" id="MF_01363"/>
    </source>
</evidence>
<evidence type="ECO:0000305" key="2"/>
<accession>Q7MX95</accession>
<protein>
    <recommendedName>
        <fullName evidence="1">Large ribosomal subunit protein bL21</fullName>
    </recommendedName>
    <alternativeName>
        <fullName evidence="2">50S ribosomal protein L21</fullName>
    </alternativeName>
</protein>
<proteinExistence type="inferred from homology"/>
<name>RL21_PORGI</name>
<comment type="function">
    <text evidence="1">This protein binds to 23S rRNA in the presence of protein L20.</text>
</comment>
<comment type="subunit">
    <text evidence="1">Part of the 50S ribosomal subunit. Contacts protein L20.</text>
</comment>
<comment type="similarity">
    <text evidence="1">Belongs to the bacterial ribosomal protein bL21 family.</text>
</comment>
<comment type="sequence caution" evidence="2">
    <conflict type="erroneous initiation">
        <sequence resource="EMBL-CDS" id="AAQ65529"/>
    </conflict>
</comment>
<keyword id="KW-1185">Reference proteome</keyword>
<keyword id="KW-0687">Ribonucleoprotein</keyword>
<keyword id="KW-0689">Ribosomal protein</keyword>
<keyword id="KW-0694">RNA-binding</keyword>
<keyword id="KW-0699">rRNA-binding</keyword>
<sequence length="105" mass="11823">MYVIVDIQGQQMKVEQGRRLFVHHIKDVESGASVEFDKVLLVDNNGAITVGSPLVEGAKVVCEVLTPLVKGDKVLIFHKKRRKGYRKLNGHRQQFTEILVKEVVA</sequence>
<organism>
    <name type="scientific">Porphyromonas gingivalis (strain ATCC BAA-308 / W83)</name>
    <dbReference type="NCBI Taxonomy" id="242619"/>
    <lineage>
        <taxon>Bacteria</taxon>
        <taxon>Pseudomonadati</taxon>
        <taxon>Bacteroidota</taxon>
        <taxon>Bacteroidia</taxon>
        <taxon>Bacteroidales</taxon>
        <taxon>Porphyromonadaceae</taxon>
        <taxon>Porphyromonas</taxon>
    </lineage>
</organism>
<dbReference type="EMBL" id="AE015924">
    <property type="protein sequence ID" value="AAQ65529.1"/>
    <property type="status" value="ALT_INIT"/>
    <property type="molecule type" value="Genomic_DNA"/>
</dbReference>
<dbReference type="RefSeq" id="WP_004584799.1">
    <property type="nucleotide sequence ID" value="NC_002950.2"/>
</dbReference>
<dbReference type="SMR" id="Q7MX95"/>
<dbReference type="STRING" id="242619.PG_0314"/>
<dbReference type="EnsemblBacteria" id="AAQ65529">
    <property type="protein sequence ID" value="AAQ65529"/>
    <property type="gene ID" value="PG_0314"/>
</dbReference>
<dbReference type="GeneID" id="57239881"/>
<dbReference type="KEGG" id="pgi:PG_0314"/>
<dbReference type="eggNOG" id="COG0261">
    <property type="taxonomic scope" value="Bacteria"/>
</dbReference>
<dbReference type="HOGENOM" id="CLU_061463_3_2_10"/>
<dbReference type="Proteomes" id="UP000000588">
    <property type="component" value="Chromosome"/>
</dbReference>
<dbReference type="GO" id="GO:0005737">
    <property type="term" value="C:cytoplasm"/>
    <property type="evidence" value="ECO:0007669"/>
    <property type="project" value="UniProtKB-ARBA"/>
</dbReference>
<dbReference type="GO" id="GO:1990904">
    <property type="term" value="C:ribonucleoprotein complex"/>
    <property type="evidence" value="ECO:0007669"/>
    <property type="project" value="UniProtKB-KW"/>
</dbReference>
<dbReference type="GO" id="GO:0005840">
    <property type="term" value="C:ribosome"/>
    <property type="evidence" value="ECO:0007669"/>
    <property type="project" value="UniProtKB-KW"/>
</dbReference>
<dbReference type="GO" id="GO:0019843">
    <property type="term" value="F:rRNA binding"/>
    <property type="evidence" value="ECO:0007669"/>
    <property type="project" value="UniProtKB-UniRule"/>
</dbReference>
<dbReference type="GO" id="GO:0003735">
    <property type="term" value="F:structural constituent of ribosome"/>
    <property type="evidence" value="ECO:0007669"/>
    <property type="project" value="InterPro"/>
</dbReference>
<dbReference type="GO" id="GO:0006412">
    <property type="term" value="P:translation"/>
    <property type="evidence" value="ECO:0007669"/>
    <property type="project" value="UniProtKB-UniRule"/>
</dbReference>
<dbReference type="HAMAP" id="MF_01363">
    <property type="entry name" value="Ribosomal_bL21"/>
    <property type="match status" value="1"/>
</dbReference>
<dbReference type="InterPro" id="IPR028909">
    <property type="entry name" value="bL21-like"/>
</dbReference>
<dbReference type="InterPro" id="IPR036164">
    <property type="entry name" value="bL21-like_sf"/>
</dbReference>
<dbReference type="InterPro" id="IPR001787">
    <property type="entry name" value="Ribosomal_bL21"/>
</dbReference>
<dbReference type="NCBIfam" id="TIGR00061">
    <property type="entry name" value="L21"/>
    <property type="match status" value="1"/>
</dbReference>
<dbReference type="PANTHER" id="PTHR21349">
    <property type="entry name" value="50S RIBOSOMAL PROTEIN L21"/>
    <property type="match status" value="1"/>
</dbReference>
<dbReference type="PANTHER" id="PTHR21349:SF0">
    <property type="entry name" value="LARGE RIBOSOMAL SUBUNIT PROTEIN BL21M"/>
    <property type="match status" value="1"/>
</dbReference>
<dbReference type="Pfam" id="PF00829">
    <property type="entry name" value="Ribosomal_L21p"/>
    <property type="match status" value="1"/>
</dbReference>
<dbReference type="SUPFAM" id="SSF141091">
    <property type="entry name" value="L21p-like"/>
    <property type="match status" value="1"/>
</dbReference>